<keyword id="KW-0067">ATP-binding</keyword>
<keyword id="KW-0963">Cytoplasm</keyword>
<keyword id="KW-1015">Disulfide bond</keyword>
<keyword id="KW-0547">Nucleotide-binding</keyword>
<keyword id="KW-0694">RNA-binding</keyword>
<keyword id="KW-0808">Transferase</keyword>
<keyword id="KW-0819">tRNA processing</keyword>
<keyword id="KW-0820">tRNA-binding</keyword>
<feature type="chain" id="PRO_0000349524" description="tRNA-specific 2-thiouridylase MnmA 1">
    <location>
        <begin position="1"/>
        <end position="364"/>
    </location>
</feature>
<feature type="region of interest" description="Interaction with tRNA" evidence="1">
    <location>
        <begin position="142"/>
        <end position="144"/>
    </location>
</feature>
<feature type="region of interest" description="Interaction with tRNA" evidence="1">
    <location>
        <begin position="309"/>
        <end position="310"/>
    </location>
</feature>
<feature type="active site" description="Nucleophile" evidence="1">
    <location>
        <position position="96"/>
    </location>
</feature>
<feature type="active site" description="Cysteine persulfide intermediate" evidence="1">
    <location>
        <position position="193"/>
    </location>
</feature>
<feature type="binding site" evidence="1">
    <location>
        <begin position="11"/>
        <end position="18"/>
    </location>
    <ligand>
        <name>ATP</name>
        <dbReference type="ChEBI" id="CHEBI:30616"/>
    </ligand>
</feature>
<feature type="binding site" evidence="1">
    <location>
        <position position="37"/>
    </location>
    <ligand>
        <name>ATP</name>
        <dbReference type="ChEBI" id="CHEBI:30616"/>
    </ligand>
</feature>
<feature type="binding site" evidence="1">
    <location>
        <position position="120"/>
    </location>
    <ligand>
        <name>ATP</name>
        <dbReference type="ChEBI" id="CHEBI:30616"/>
    </ligand>
</feature>
<feature type="site" description="Interaction with tRNA" evidence="1">
    <location>
        <position position="121"/>
    </location>
</feature>
<feature type="site" description="Interaction with tRNA" evidence="1">
    <location>
        <position position="342"/>
    </location>
</feature>
<feature type="disulfide bond" description="Alternate" evidence="1">
    <location>
        <begin position="96"/>
        <end position="193"/>
    </location>
</feature>
<protein>
    <recommendedName>
        <fullName evidence="1">tRNA-specific 2-thiouridylase MnmA 1</fullName>
        <ecNumber evidence="1">2.8.1.13</ecNumber>
    </recommendedName>
</protein>
<accession>Q5LIS5</accession>
<proteinExistence type="inferred from homology"/>
<dbReference type="EC" id="2.8.1.13" evidence="1"/>
<dbReference type="EMBL" id="CR626927">
    <property type="protein sequence ID" value="CAH05951.1"/>
    <property type="molecule type" value="Genomic_DNA"/>
</dbReference>
<dbReference type="SMR" id="Q5LIS5"/>
<dbReference type="PaxDb" id="272559-BF9343_0172"/>
<dbReference type="KEGG" id="bfs:BF9343_0172"/>
<dbReference type="eggNOG" id="COG0482">
    <property type="taxonomic scope" value="Bacteria"/>
</dbReference>
<dbReference type="HOGENOM" id="CLU_035188_0_0_10"/>
<dbReference type="Proteomes" id="UP000006731">
    <property type="component" value="Chromosome"/>
</dbReference>
<dbReference type="GO" id="GO:0005737">
    <property type="term" value="C:cytoplasm"/>
    <property type="evidence" value="ECO:0007669"/>
    <property type="project" value="UniProtKB-SubCell"/>
</dbReference>
<dbReference type="GO" id="GO:0005524">
    <property type="term" value="F:ATP binding"/>
    <property type="evidence" value="ECO:0007669"/>
    <property type="project" value="UniProtKB-KW"/>
</dbReference>
<dbReference type="GO" id="GO:0000049">
    <property type="term" value="F:tRNA binding"/>
    <property type="evidence" value="ECO:0007669"/>
    <property type="project" value="UniProtKB-KW"/>
</dbReference>
<dbReference type="GO" id="GO:0103016">
    <property type="term" value="F:tRNA-uridine 2-sulfurtransferase activity"/>
    <property type="evidence" value="ECO:0007669"/>
    <property type="project" value="UniProtKB-EC"/>
</dbReference>
<dbReference type="GO" id="GO:0002143">
    <property type="term" value="P:tRNA wobble position uridine thiolation"/>
    <property type="evidence" value="ECO:0007669"/>
    <property type="project" value="TreeGrafter"/>
</dbReference>
<dbReference type="CDD" id="cd01998">
    <property type="entry name" value="MnmA_TRMU-like"/>
    <property type="match status" value="1"/>
</dbReference>
<dbReference type="Gene3D" id="2.30.30.280">
    <property type="entry name" value="Adenine nucleotide alpha hydrolases-like domains"/>
    <property type="match status" value="1"/>
</dbReference>
<dbReference type="Gene3D" id="3.40.50.620">
    <property type="entry name" value="HUPs"/>
    <property type="match status" value="1"/>
</dbReference>
<dbReference type="Gene3D" id="2.40.30.10">
    <property type="entry name" value="Translation factors"/>
    <property type="match status" value="1"/>
</dbReference>
<dbReference type="HAMAP" id="MF_00144">
    <property type="entry name" value="tRNA_thiouridyl_MnmA"/>
    <property type="match status" value="1"/>
</dbReference>
<dbReference type="InterPro" id="IPR004506">
    <property type="entry name" value="MnmA-like"/>
</dbReference>
<dbReference type="InterPro" id="IPR046885">
    <property type="entry name" value="MnmA-like_C"/>
</dbReference>
<dbReference type="InterPro" id="IPR046884">
    <property type="entry name" value="MnmA-like_central"/>
</dbReference>
<dbReference type="InterPro" id="IPR023382">
    <property type="entry name" value="MnmA-like_central_sf"/>
</dbReference>
<dbReference type="InterPro" id="IPR001763">
    <property type="entry name" value="Rhodanese-like_dom"/>
</dbReference>
<dbReference type="InterPro" id="IPR014729">
    <property type="entry name" value="Rossmann-like_a/b/a_fold"/>
</dbReference>
<dbReference type="NCBIfam" id="NF001138">
    <property type="entry name" value="PRK00143.1"/>
    <property type="match status" value="1"/>
</dbReference>
<dbReference type="NCBIfam" id="NF011259">
    <property type="entry name" value="PRK14665.1"/>
    <property type="match status" value="1"/>
</dbReference>
<dbReference type="NCBIfam" id="TIGR00420">
    <property type="entry name" value="trmU"/>
    <property type="match status" value="1"/>
</dbReference>
<dbReference type="PANTHER" id="PTHR11933:SF5">
    <property type="entry name" value="MITOCHONDRIAL TRNA-SPECIFIC 2-THIOURIDYLASE 1"/>
    <property type="match status" value="1"/>
</dbReference>
<dbReference type="PANTHER" id="PTHR11933">
    <property type="entry name" value="TRNA 5-METHYLAMINOMETHYL-2-THIOURIDYLATE -METHYLTRANSFERASE"/>
    <property type="match status" value="1"/>
</dbReference>
<dbReference type="Pfam" id="PF03054">
    <property type="entry name" value="tRNA_Me_trans"/>
    <property type="match status" value="1"/>
</dbReference>
<dbReference type="Pfam" id="PF20258">
    <property type="entry name" value="tRNA_Me_trans_C"/>
    <property type="match status" value="1"/>
</dbReference>
<dbReference type="Pfam" id="PF20259">
    <property type="entry name" value="tRNA_Me_trans_M"/>
    <property type="match status" value="1"/>
</dbReference>
<dbReference type="SUPFAM" id="SSF52402">
    <property type="entry name" value="Adenine nucleotide alpha hydrolases-like"/>
    <property type="match status" value="1"/>
</dbReference>
<evidence type="ECO:0000255" key="1">
    <source>
        <dbReference type="HAMAP-Rule" id="MF_00144"/>
    </source>
</evidence>
<reference key="1">
    <citation type="journal article" date="2005" name="Science">
        <title>Extensive DNA inversions in the B. fragilis genome control variable gene expression.</title>
        <authorList>
            <person name="Cerdeno-Tarraga A.-M."/>
            <person name="Patrick S."/>
            <person name="Crossman L.C."/>
            <person name="Blakely G."/>
            <person name="Abratt V."/>
            <person name="Lennard N."/>
            <person name="Poxton I."/>
            <person name="Duerden B."/>
            <person name="Harris B."/>
            <person name="Quail M.A."/>
            <person name="Barron A."/>
            <person name="Clark L."/>
            <person name="Corton C."/>
            <person name="Doggett J."/>
            <person name="Holden M.T.G."/>
            <person name="Larke N."/>
            <person name="Line A."/>
            <person name="Lord A."/>
            <person name="Norbertczak H."/>
            <person name="Ormond D."/>
            <person name="Price C."/>
            <person name="Rabbinowitsch E."/>
            <person name="Woodward J."/>
            <person name="Barrell B.G."/>
            <person name="Parkhill J."/>
        </authorList>
    </citation>
    <scope>NUCLEOTIDE SEQUENCE [LARGE SCALE GENOMIC DNA]</scope>
    <source>
        <strain>ATCC 25285 / DSM 2151 / CCUG 4856 / JCM 11019 / LMG 10263 / NCTC 9343 / Onslow / VPI 2553 / EN-2</strain>
    </source>
</reference>
<comment type="function">
    <text evidence="1">Catalyzes the 2-thiolation of uridine at the wobble position (U34) of tRNA, leading to the formation of s(2)U34.</text>
</comment>
<comment type="catalytic activity">
    <reaction evidence="1">
        <text>S-sulfanyl-L-cysteinyl-[protein] + uridine(34) in tRNA + AH2 + ATP = 2-thiouridine(34) in tRNA + L-cysteinyl-[protein] + A + AMP + diphosphate + H(+)</text>
        <dbReference type="Rhea" id="RHEA:47032"/>
        <dbReference type="Rhea" id="RHEA-COMP:10131"/>
        <dbReference type="Rhea" id="RHEA-COMP:11726"/>
        <dbReference type="Rhea" id="RHEA-COMP:11727"/>
        <dbReference type="Rhea" id="RHEA-COMP:11728"/>
        <dbReference type="ChEBI" id="CHEBI:13193"/>
        <dbReference type="ChEBI" id="CHEBI:15378"/>
        <dbReference type="ChEBI" id="CHEBI:17499"/>
        <dbReference type="ChEBI" id="CHEBI:29950"/>
        <dbReference type="ChEBI" id="CHEBI:30616"/>
        <dbReference type="ChEBI" id="CHEBI:33019"/>
        <dbReference type="ChEBI" id="CHEBI:61963"/>
        <dbReference type="ChEBI" id="CHEBI:65315"/>
        <dbReference type="ChEBI" id="CHEBI:87170"/>
        <dbReference type="ChEBI" id="CHEBI:456215"/>
        <dbReference type="EC" id="2.8.1.13"/>
    </reaction>
</comment>
<comment type="subcellular location">
    <subcellularLocation>
        <location evidence="1">Cytoplasm</location>
    </subcellularLocation>
</comment>
<comment type="similarity">
    <text evidence="1">Belongs to the MnmA/TRMU family.</text>
</comment>
<organism>
    <name type="scientific">Bacteroides fragilis (strain ATCC 25285 / DSM 2151 / CCUG 4856 / JCM 11019 / LMG 10263 / NCTC 9343 / Onslow / VPI 2553 / EN-2)</name>
    <dbReference type="NCBI Taxonomy" id="272559"/>
    <lineage>
        <taxon>Bacteria</taxon>
        <taxon>Pseudomonadati</taxon>
        <taxon>Bacteroidota</taxon>
        <taxon>Bacteroidia</taxon>
        <taxon>Bacteroidales</taxon>
        <taxon>Bacteroidaceae</taxon>
        <taxon>Bacteroides</taxon>
    </lineage>
</organism>
<name>MNMA1_BACFN</name>
<gene>
    <name evidence="1" type="primary">mnmA1</name>
    <name type="ordered locus">BF0174</name>
</gene>
<sequence>MMEKNKRVLLGMSGGTDSSVAAMLLLEAGYEVTGVTFRFYEFNGSTEYLEDARALAARLGIGHITYDARKVFQEQIIDYFIDEYMSGHTPVPCTLCNNQLKWPLLAKIADEMGIFYLATGHYVRKQWIDGNYYIAPAEDVDKDQSFFLWGLRQEILQRMLLPMGGMTKSEARAYAAGRGFEKVSKKKDSIGVCFCPLDYRSFLKKCLCDESGDKNRNIYRKVERGRFLDESGNFIAWHEGYPFYTIGQRRGLGIQLNRAVFVKEIHPETNEVVLASLKSLEKSEMWLKDWNIVDESRLLGCDDVIVKIRYRKQENHCSVTITPEGLLHIRLHEPLSAIAEGQAAAFYKDGLLLGGGIITMTDQR</sequence>